<dbReference type="EMBL" id="CP000825">
    <property type="protein sequence ID" value="ABV51548.1"/>
    <property type="molecule type" value="Genomic_DNA"/>
</dbReference>
<dbReference type="RefSeq" id="WP_002807923.1">
    <property type="nucleotide sequence ID" value="NC_009840.1"/>
</dbReference>
<dbReference type="SMR" id="A8G7G7"/>
<dbReference type="STRING" id="93060.P9215_19351"/>
<dbReference type="KEGG" id="pmh:P9215_19351"/>
<dbReference type="eggNOG" id="COG0292">
    <property type="taxonomic scope" value="Bacteria"/>
</dbReference>
<dbReference type="HOGENOM" id="CLU_123265_1_0_3"/>
<dbReference type="OrthoDB" id="9808966at2"/>
<dbReference type="Proteomes" id="UP000002014">
    <property type="component" value="Chromosome"/>
</dbReference>
<dbReference type="GO" id="GO:1990904">
    <property type="term" value="C:ribonucleoprotein complex"/>
    <property type="evidence" value="ECO:0007669"/>
    <property type="project" value="UniProtKB-KW"/>
</dbReference>
<dbReference type="GO" id="GO:0005840">
    <property type="term" value="C:ribosome"/>
    <property type="evidence" value="ECO:0007669"/>
    <property type="project" value="UniProtKB-KW"/>
</dbReference>
<dbReference type="GO" id="GO:0019843">
    <property type="term" value="F:rRNA binding"/>
    <property type="evidence" value="ECO:0007669"/>
    <property type="project" value="UniProtKB-UniRule"/>
</dbReference>
<dbReference type="GO" id="GO:0003735">
    <property type="term" value="F:structural constituent of ribosome"/>
    <property type="evidence" value="ECO:0007669"/>
    <property type="project" value="InterPro"/>
</dbReference>
<dbReference type="GO" id="GO:0000027">
    <property type="term" value="P:ribosomal large subunit assembly"/>
    <property type="evidence" value="ECO:0007669"/>
    <property type="project" value="UniProtKB-UniRule"/>
</dbReference>
<dbReference type="GO" id="GO:0006412">
    <property type="term" value="P:translation"/>
    <property type="evidence" value="ECO:0007669"/>
    <property type="project" value="InterPro"/>
</dbReference>
<dbReference type="CDD" id="cd07026">
    <property type="entry name" value="Ribosomal_L20"/>
    <property type="match status" value="1"/>
</dbReference>
<dbReference type="FunFam" id="1.10.1900.20:FF:000001">
    <property type="entry name" value="50S ribosomal protein L20"/>
    <property type="match status" value="1"/>
</dbReference>
<dbReference type="Gene3D" id="6.10.160.10">
    <property type="match status" value="1"/>
</dbReference>
<dbReference type="Gene3D" id="1.10.1900.20">
    <property type="entry name" value="Ribosomal protein L20"/>
    <property type="match status" value="1"/>
</dbReference>
<dbReference type="HAMAP" id="MF_00382">
    <property type="entry name" value="Ribosomal_bL20"/>
    <property type="match status" value="1"/>
</dbReference>
<dbReference type="InterPro" id="IPR005813">
    <property type="entry name" value="Ribosomal_bL20"/>
</dbReference>
<dbReference type="InterPro" id="IPR049946">
    <property type="entry name" value="RIBOSOMAL_L20_CS"/>
</dbReference>
<dbReference type="InterPro" id="IPR035566">
    <property type="entry name" value="Ribosomal_protein_bL20_C"/>
</dbReference>
<dbReference type="NCBIfam" id="TIGR01032">
    <property type="entry name" value="rplT_bact"/>
    <property type="match status" value="1"/>
</dbReference>
<dbReference type="PANTHER" id="PTHR10986">
    <property type="entry name" value="39S RIBOSOMAL PROTEIN L20"/>
    <property type="match status" value="1"/>
</dbReference>
<dbReference type="Pfam" id="PF00453">
    <property type="entry name" value="Ribosomal_L20"/>
    <property type="match status" value="1"/>
</dbReference>
<dbReference type="PRINTS" id="PR00062">
    <property type="entry name" value="RIBOSOMALL20"/>
</dbReference>
<dbReference type="SUPFAM" id="SSF74731">
    <property type="entry name" value="Ribosomal protein L20"/>
    <property type="match status" value="1"/>
</dbReference>
<dbReference type="PROSITE" id="PS00937">
    <property type="entry name" value="RIBOSOMAL_L20"/>
    <property type="match status" value="1"/>
</dbReference>
<feature type="chain" id="PRO_1000060690" description="Large ribosomal subunit protein bL20">
    <location>
        <begin position="1"/>
        <end position="115"/>
    </location>
</feature>
<comment type="function">
    <text evidence="1">Binds directly to 23S ribosomal RNA and is necessary for the in vitro assembly process of the 50S ribosomal subunit. It is not involved in the protein synthesizing functions of that subunit.</text>
</comment>
<comment type="similarity">
    <text evidence="1">Belongs to the bacterial ribosomal protein bL20 family.</text>
</comment>
<name>RL20_PROM2</name>
<reference key="1">
    <citation type="journal article" date="2007" name="PLoS Genet.">
        <title>Patterns and implications of gene gain and loss in the evolution of Prochlorococcus.</title>
        <authorList>
            <person name="Kettler G.C."/>
            <person name="Martiny A.C."/>
            <person name="Huang K."/>
            <person name="Zucker J."/>
            <person name="Coleman M.L."/>
            <person name="Rodrigue S."/>
            <person name="Chen F."/>
            <person name="Lapidus A."/>
            <person name="Ferriera S."/>
            <person name="Johnson J."/>
            <person name="Steglich C."/>
            <person name="Church G.M."/>
            <person name="Richardson P."/>
            <person name="Chisholm S.W."/>
        </authorList>
    </citation>
    <scope>NUCLEOTIDE SEQUENCE [LARGE SCALE GENOMIC DNA]</scope>
    <source>
        <strain>MIT 9215</strain>
    </source>
</reference>
<keyword id="KW-0687">Ribonucleoprotein</keyword>
<keyword id="KW-0689">Ribosomal protein</keyword>
<keyword id="KW-0694">RNA-binding</keyword>
<keyword id="KW-0699">rRNA-binding</keyword>
<sequence>MARVKRGNIARKRRNKILNLAKGFRGGNKNLFRTANQRVMKALCNAYRDRRRRKRDFRRLWISRINASARINGTNYSKLINGMKNSEIIINRKMLAQLALSDPKCFEKIVSSVSN</sequence>
<accession>A8G7G7</accession>
<organism>
    <name type="scientific">Prochlorococcus marinus (strain MIT 9215)</name>
    <dbReference type="NCBI Taxonomy" id="93060"/>
    <lineage>
        <taxon>Bacteria</taxon>
        <taxon>Bacillati</taxon>
        <taxon>Cyanobacteriota</taxon>
        <taxon>Cyanophyceae</taxon>
        <taxon>Synechococcales</taxon>
        <taxon>Prochlorococcaceae</taxon>
        <taxon>Prochlorococcus</taxon>
    </lineage>
</organism>
<proteinExistence type="inferred from homology"/>
<protein>
    <recommendedName>
        <fullName evidence="1">Large ribosomal subunit protein bL20</fullName>
    </recommendedName>
    <alternativeName>
        <fullName evidence="2">50S ribosomal protein L20</fullName>
    </alternativeName>
</protein>
<gene>
    <name evidence="1" type="primary">rplT</name>
    <name evidence="1" type="synonym">rpl20</name>
    <name type="ordered locus">P9215_19351</name>
</gene>
<evidence type="ECO:0000255" key="1">
    <source>
        <dbReference type="HAMAP-Rule" id="MF_00382"/>
    </source>
</evidence>
<evidence type="ECO:0000305" key="2"/>